<proteinExistence type="inferred from homology"/>
<protein>
    <recommendedName>
        <fullName evidence="2">FMN-dependent NADH:quinone oxidoreductase</fullName>
        <ecNumber evidence="2">1.6.5.-</ecNumber>
    </recommendedName>
    <alternativeName>
        <fullName evidence="2">Azo-dye reductase</fullName>
    </alternativeName>
    <alternativeName>
        <fullName evidence="2">FMN-dependent NADH-azo compound oxidoreductase</fullName>
    </alternativeName>
    <alternativeName>
        <fullName evidence="2">FMN-dependent NADH-azoreductase</fullName>
        <ecNumber evidence="2">1.7.1.17</ecNumber>
    </alternativeName>
</protein>
<reference key="1">
    <citation type="journal article" date="2004" name="Proc. Natl. Acad. Sci. U.S.A.">
        <title>Genome sequence of the enterobacterial phytopathogen Erwinia carotovora subsp. atroseptica and characterization of virulence factors.</title>
        <authorList>
            <person name="Bell K.S."/>
            <person name="Sebaihia M."/>
            <person name="Pritchard L."/>
            <person name="Holden M.T.G."/>
            <person name="Hyman L.J."/>
            <person name="Holeva M.C."/>
            <person name="Thomson N.R."/>
            <person name="Bentley S.D."/>
            <person name="Churcher L.J.C."/>
            <person name="Mungall K."/>
            <person name="Atkin R."/>
            <person name="Bason N."/>
            <person name="Brooks K."/>
            <person name="Chillingworth T."/>
            <person name="Clark K."/>
            <person name="Doggett J."/>
            <person name="Fraser A."/>
            <person name="Hance Z."/>
            <person name="Hauser H."/>
            <person name="Jagels K."/>
            <person name="Moule S."/>
            <person name="Norbertczak H."/>
            <person name="Ormond D."/>
            <person name="Price C."/>
            <person name="Quail M.A."/>
            <person name="Sanders M."/>
            <person name="Walker D."/>
            <person name="Whitehead S."/>
            <person name="Salmond G.P.C."/>
            <person name="Birch P.R.J."/>
            <person name="Parkhill J."/>
            <person name="Toth I.K."/>
        </authorList>
    </citation>
    <scope>NUCLEOTIDE SEQUENCE [LARGE SCALE GENOMIC DNA]</scope>
    <source>
        <strain>SCRI 1043 / ATCC BAA-672</strain>
    </source>
</reference>
<accession>Q6D5N6</accession>
<evidence type="ECO:0000250" key="1"/>
<evidence type="ECO:0000255" key="2">
    <source>
        <dbReference type="HAMAP-Rule" id="MF_01216"/>
    </source>
</evidence>
<keyword id="KW-0285">Flavoprotein</keyword>
<keyword id="KW-0288">FMN</keyword>
<keyword id="KW-0520">NAD</keyword>
<keyword id="KW-0560">Oxidoreductase</keyword>
<keyword id="KW-1185">Reference proteome</keyword>
<comment type="function">
    <text evidence="2">Quinone reductase that provides resistance to thiol-specific stress caused by electrophilic quinones.</text>
</comment>
<comment type="function">
    <text evidence="2">Also exhibits azoreductase activity. Catalyzes the reductive cleavage of the azo bond in aromatic azo compounds to the corresponding amines.</text>
</comment>
<comment type="catalytic activity">
    <reaction evidence="2">
        <text>2 a quinone + NADH + H(+) = 2 a 1,4-benzosemiquinone + NAD(+)</text>
        <dbReference type="Rhea" id="RHEA:65952"/>
        <dbReference type="ChEBI" id="CHEBI:15378"/>
        <dbReference type="ChEBI" id="CHEBI:57540"/>
        <dbReference type="ChEBI" id="CHEBI:57945"/>
        <dbReference type="ChEBI" id="CHEBI:132124"/>
        <dbReference type="ChEBI" id="CHEBI:134225"/>
    </reaction>
</comment>
<comment type="catalytic activity">
    <reaction evidence="2">
        <text>N,N-dimethyl-1,4-phenylenediamine + anthranilate + 2 NAD(+) = 2-(4-dimethylaminophenyl)diazenylbenzoate + 2 NADH + 2 H(+)</text>
        <dbReference type="Rhea" id="RHEA:55872"/>
        <dbReference type="ChEBI" id="CHEBI:15378"/>
        <dbReference type="ChEBI" id="CHEBI:15783"/>
        <dbReference type="ChEBI" id="CHEBI:16567"/>
        <dbReference type="ChEBI" id="CHEBI:57540"/>
        <dbReference type="ChEBI" id="CHEBI:57945"/>
        <dbReference type="ChEBI" id="CHEBI:71579"/>
        <dbReference type="EC" id="1.7.1.17"/>
    </reaction>
</comment>
<comment type="cofactor">
    <cofactor evidence="2">
        <name>FMN</name>
        <dbReference type="ChEBI" id="CHEBI:58210"/>
    </cofactor>
    <text evidence="2">Binds 1 FMN per subunit.</text>
</comment>
<comment type="subunit">
    <text evidence="2">Homodimer.</text>
</comment>
<comment type="similarity">
    <text evidence="2">Belongs to the azoreductase type 1 family.</text>
</comment>
<dbReference type="EC" id="1.6.5.-" evidence="2"/>
<dbReference type="EC" id="1.7.1.17" evidence="2"/>
<dbReference type="EMBL" id="BX950851">
    <property type="protein sequence ID" value="CAG74906.1"/>
    <property type="molecule type" value="Genomic_DNA"/>
</dbReference>
<dbReference type="RefSeq" id="WP_005972365.1">
    <property type="nucleotide sequence ID" value="NC_004547.2"/>
</dbReference>
<dbReference type="SMR" id="Q6D5N6"/>
<dbReference type="STRING" id="218491.ECA2005"/>
<dbReference type="KEGG" id="eca:ECA2005"/>
<dbReference type="eggNOG" id="COG1182">
    <property type="taxonomic scope" value="Bacteria"/>
</dbReference>
<dbReference type="HOGENOM" id="CLU_088964_0_0_6"/>
<dbReference type="OrthoDB" id="9787136at2"/>
<dbReference type="Proteomes" id="UP000007966">
    <property type="component" value="Chromosome"/>
</dbReference>
<dbReference type="GO" id="GO:0009055">
    <property type="term" value="F:electron transfer activity"/>
    <property type="evidence" value="ECO:0007669"/>
    <property type="project" value="UniProtKB-UniRule"/>
</dbReference>
<dbReference type="GO" id="GO:0010181">
    <property type="term" value="F:FMN binding"/>
    <property type="evidence" value="ECO:0007669"/>
    <property type="project" value="UniProtKB-UniRule"/>
</dbReference>
<dbReference type="GO" id="GO:0016652">
    <property type="term" value="F:oxidoreductase activity, acting on NAD(P)H as acceptor"/>
    <property type="evidence" value="ECO:0007669"/>
    <property type="project" value="UniProtKB-UniRule"/>
</dbReference>
<dbReference type="GO" id="GO:0016655">
    <property type="term" value="F:oxidoreductase activity, acting on NAD(P)H, quinone or similar compound as acceptor"/>
    <property type="evidence" value="ECO:0007669"/>
    <property type="project" value="InterPro"/>
</dbReference>
<dbReference type="FunFam" id="3.40.50.360:FF:000010">
    <property type="entry name" value="FMN-dependent NADH-azoreductase"/>
    <property type="match status" value="1"/>
</dbReference>
<dbReference type="Gene3D" id="3.40.50.360">
    <property type="match status" value="1"/>
</dbReference>
<dbReference type="HAMAP" id="MF_01216">
    <property type="entry name" value="Azoreductase_type1"/>
    <property type="match status" value="1"/>
</dbReference>
<dbReference type="InterPro" id="IPR003680">
    <property type="entry name" value="Flavodoxin_fold"/>
</dbReference>
<dbReference type="InterPro" id="IPR029039">
    <property type="entry name" value="Flavoprotein-like_sf"/>
</dbReference>
<dbReference type="InterPro" id="IPR050104">
    <property type="entry name" value="FMN-dep_NADH:Q_OxRdtase_AzoR1"/>
</dbReference>
<dbReference type="InterPro" id="IPR023048">
    <property type="entry name" value="NADH:quinone_OxRdtase_FMN_depd"/>
</dbReference>
<dbReference type="PANTHER" id="PTHR43741">
    <property type="entry name" value="FMN-DEPENDENT NADH-AZOREDUCTASE 1"/>
    <property type="match status" value="1"/>
</dbReference>
<dbReference type="PANTHER" id="PTHR43741:SF2">
    <property type="entry name" value="FMN-DEPENDENT NADH:QUINONE OXIDOREDUCTASE"/>
    <property type="match status" value="1"/>
</dbReference>
<dbReference type="Pfam" id="PF02525">
    <property type="entry name" value="Flavodoxin_2"/>
    <property type="match status" value="1"/>
</dbReference>
<dbReference type="SUPFAM" id="SSF52218">
    <property type="entry name" value="Flavoproteins"/>
    <property type="match status" value="1"/>
</dbReference>
<sequence>MSKVLVLKSSILAGYSQSNQLADHFTTQWQSAHPDDSITVRDLAAQPIPVLDGELVGALRPSDATLTPRQQEALKLSDDLIAELQAHDVIVIAAPMYNFNIPTQLKNYFDLVARAGVTFRYTEQGPEGLVKGKRAIVLTSRGGIHKGTPTDLLEPYLRVFLGFLGLTDLEFVFAEGYGYGPDVAQKATEDAKTQLSQLVTA</sequence>
<gene>
    <name evidence="2" type="primary">azoR</name>
    <name type="ordered locus">ECA2005</name>
</gene>
<feature type="initiator methionine" description="Removed" evidence="1">
    <location>
        <position position="1"/>
    </location>
</feature>
<feature type="chain" id="PRO_0000166313" description="FMN-dependent NADH:quinone oxidoreductase">
    <location>
        <begin position="2"/>
        <end position="201"/>
    </location>
</feature>
<feature type="binding site" evidence="2">
    <location>
        <position position="10"/>
    </location>
    <ligand>
        <name>FMN</name>
        <dbReference type="ChEBI" id="CHEBI:58210"/>
    </ligand>
</feature>
<feature type="binding site" evidence="2">
    <location>
        <begin position="16"/>
        <end position="18"/>
    </location>
    <ligand>
        <name>FMN</name>
        <dbReference type="ChEBI" id="CHEBI:58210"/>
    </ligand>
</feature>
<feature type="binding site" evidence="2">
    <location>
        <begin position="96"/>
        <end position="99"/>
    </location>
    <ligand>
        <name>FMN</name>
        <dbReference type="ChEBI" id="CHEBI:58210"/>
    </ligand>
</feature>
<feature type="binding site" evidence="2">
    <location>
        <begin position="140"/>
        <end position="143"/>
    </location>
    <ligand>
        <name>FMN</name>
        <dbReference type="ChEBI" id="CHEBI:58210"/>
    </ligand>
</feature>
<name>AZOR_PECAS</name>
<organism>
    <name type="scientific">Pectobacterium atrosepticum (strain SCRI 1043 / ATCC BAA-672)</name>
    <name type="common">Erwinia carotovora subsp. atroseptica</name>
    <dbReference type="NCBI Taxonomy" id="218491"/>
    <lineage>
        <taxon>Bacteria</taxon>
        <taxon>Pseudomonadati</taxon>
        <taxon>Pseudomonadota</taxon>
        <taxon>Gammaproteobacteria</taxon>
        <taxon>Enterobacterales</taxon>
        <taxon>Pectobacteriaceae</taxon>
        <taxon>Pectobacterium</taxon>
    </lineage>
</organism>